<reference key="1">
    <citation type="journal article" date="2005" name="J. Bacteriol.">
        <title>Completion of the genome sequence of Brucella abortus and comparison to the highly similar genomes of Brucella melitensis and Brucella suis.</title>
        <authorList>
            <person name="Halling S.M."/>
            <person name="Peterson-Burch B.D."/>
            <person name="Bricker B.J."/>
            <person name="Zuerner R.L."/>
            <person name="Qing Z."/>
            <person name="Li L.-L."/>
            <person name="Kapur V."/>
            <person name="Alt D.P."/>
            <person name="Olsen S.C."/>
        </authorList>
    </citation>
    <scope>NUCLEOTIDE SEQUENCE [LARGE SCALE GENOMIC DNA]</scope>
    <source>
        <strain>9-941</strain>
    </source>
</reference>
<keyword id="KW-0732">Signal</keyword>
<keyword id="KW-0843">Virulence</keyword>
<comment type="similarity">
    <text evidence="2">Belongs to the TrbG/VirB9 family.</text>
</comment>
<name>VIRB9_BRUAB</name>
<accession>P0C533</accession>
<accession>Q57A22</accession>
<accession>Q7BMZ5</accession>
<sequence>MKRFLLACILITLASPSWATKIPSGSKYDSRIQYVDYNSGDVVLVRALPGVGARIVFAPGENIEDVASGFTQGWEFKASHNILYLKARSMTLSHSNQSIDMAPEPGKWDTNLMVTTDQRMYDFDLRLMPGRNNQRVAYRVQFRYPAAAAAAAVAAAQKRVVQARMNARPSPVNWNYTMQVGTNSASIAPTLAYDDGRFTYLRFPNNRDFPAAFLVAEDKSESIVNSHIDPSAPDILVLHRVAKQMVLRLGNKVIGIYNESFNPDGVPARDGTTVPGVKRVIKSPGENLQ</sequence>
<proteinExistence type="inferred from homology"/>
<evidence type="ECO:0000255" key="1"/>
<evidence type="ECO:0000305" key="2"/>
<organism>
    <name type="scientific">Brucella abortus biovar 1 (strain 9-941)</name>
    <dbReference type="NCBI Taxonomy" id="262698"/>
    <lineage>
        <taxon>Bacteria</taxon>
        <taxon>Pseudomonadati</taxon>
        <taxon>Pseudomonadota</taxon>
        <taxon>Alphaproteobacteria</taxon>
        <taxon>Hyphomicrobiales</taxon>
        <taxon>Brucellaceae</taxon>
        <taxon>Brucella/Ochrobactrum group</taxon>
        <taxon>Brucella</taxon>
    </lineage>
</organism>
<protein>
    <recommendedName>
        <fullName>Type IV secretion system protein virB9</fullName>
    </recommendedName>
</protein>
<gene>
    <name type="primary">virB9</name>
    <name type="ordered locus">BruAb2_0061</name>
</gene>
<feature type="signal peptide" evidence="1">
    <location>
        <begin position="1"/>
        <end position="19"/>
    </location>
</feature>
<feature type="chain" id="PRO_0000291433" description="Type IV secretion system protein virB9">
    <location>
        <begin position="20"/>
        <end position="289"/>
    </location>
</feature>
<dbReference type="EMBL" id="AE017224">
    <property type="protein sequence ID" value="AAX75512.1"/>
    <property type="molecule type" value="Genomic_DNA"/>
</dbReference>
<dbReference type="RefSeq" id="WP_002966518.1">
    <property type="nucleotide sequence ID" value="NC_006933.1"/>
</dbReference>
<dbReference type="SMR" id="P0C533"/>
<dbReference type="EnsemblBacteria" id="AAX75512">
    <property type="protein sequence ID" value="AAX75512"/>
    <property type="gene ID" value="BruAb2_0061"/>
</dbReference>
<dbReference type="GeneID" id="93015962"/>
<dbReference type="KEGG" id="bmb:BruAb2_0061"/>
<dbReference type="HOGENOM" id="CLU_058585_3_0_5"/>
<dbReference type="PRO" id="PR:P0C533"/>
<dbReference type="Proteomes" id="UP000000540">
    <property type="component" value="Chromosome II"/>
</dbReference>
<dbReference type="CDD" id="cd06911">
    <property type="entry name" value="VirB9_CagX_TrbG"/>
    <property type="match status" value="1"/>
</dbReference>
<dbReference type="Gene3D" id="2.60.40.2500">
    <property type="match status" value="1"/>
</dbReference>
<dbReference type="InterPro" id="IPR010258">
    <property type="entry name" value="Conjugal_tfr_TrbG/VirB9/CagX"/>
</dbReference>
<dbReference type="InterPro" id="IPR014148">
    <property type="entry name" value="VirB9"/>
</dbReference>
<dbReference type="InterPro" id="IPR033645">
    <property type="entry name" value="VirB9/CagX/TrbG_C"/>
</dbReference>
<dbReference type="InterPro" id="IPR038161">
    <property type="entry name" value="VirB9/CagX/TrbG_C_sf"/>
</dbReference>
<dbReference type="NCBIfam" id="TIGR02781">
    <property type="entry name" value="VirB9"/>
    <property type="match status" value="1"/>
</dbReference>
<dbReference type="Pfam" id="PF03524">
    <property type="entry name" value="CagX"/>
    <property type="match status" value="1"/>
</dbReference>